<accession>P76118</accession>
<accession>Q2MBA9</accession>
<organism>
    <name type="scientific">Escherichia coli (strain K12)</name>
    <dbReference type="NCBI Taxonomy" id="83333"/>
    <lineage>
        <taxon>Bacteria</taxon>
        <taxon>Pseudomonadati</taxon>
        <taxon>Pseudomonadota</taxon>
        <taxon>Gammaproteobacteria</taxon>
        <taxon>Enterobacterales</taxon>
        <taxon>Enterobacteriaceae</taxon>
        <taxon>Escherichia</taxon>
    </lineage>
</organism>
<proteinExistence type="predicted"/>
<sequence>MVCFLIYITLLFIQRVYFISSEKKLTIHIVQMFQLLSQAFYNLKMFLMMDMLGVGDAININTNKNIRQVC</sequence>
<name>YNCH_ECOLI</name>
<feature type="chain" id="PRO_0000168940" description="Uncharacterized protein YncH">
    <location>
        <begin position="1"/>
        <end position="70"/>
    </location>
</feature>
<keyword id="KW-1185">Reference proteome</keyword>
<protein>
    <recommendedName>
        <fullName>Uncharacterized protein YncH</fullName>
    </recommendedName>
</protein>
<dbReference type="EMBL" id="U00096">
    <property type="protein sequence ID" value="AAC74537.1"/>
    <property type="molecule type" value="Genomic_DNA"/>
</dbReference>
<dbReference type="EMBL" id="AP009048">
    <property type="protein sequence ID" value="BAE76447.1"/>
    <property type="molecule type" value="Genomic_DNA"/>
</dbReference>
<dbReference type="PIR" id="B64898">
    <property type="entry name" value="B64898"/>
</dbReference>
<dbReference type="RefSeq" id="NP_415972.1">
    <property type="nucleotide sequence ID" value="NC_000913.3"/>
</dbReference>
<dbReference type="RefSeq" id="WP_000226995.1">
    <property type="nucleotide sequence ID" value="NZ_SSZK01000021.1"/>
</dbReference>
<dbReference type="BioGRID" id="4260201">
    <property type="interactions" value="10"/>
</dbReference>
<dbReference type="DIP" id="DIP-12752N"/>
<dbReference type="FunCoup" id="P76118">
    <property type="interactions" value="27"/>
</dbReference>
<dbReference type="STRING" id="511145.b1455"/>
<dbReference type="PaxDb" id="511145-b1455"/>
<dbReference type="EnsemblBacteria" id="AAC74537">
    <property type="protein sequence ID" value="AAC74537"/>
    <property type="gene ID" value="b1455"/>
</dbReference>
<dbReference type="GeneID" id="946024"/>
<dbReference type="KEGG" id="ecj:JW5235"/>
<dbReference type="KEGG" id="eco:b1455"/>
<dbReference type="KEGG" id="ecoc:C3026_08460"/>
<dbReference type="PATRIC" id="fig|511145.12.peg.1521"/>
<dbReference type="EchoBASE" id="EB3540"/>
<dbReference type="HOGENOM" id="CLU_2751354_0_0_6"/>
<dbReference type="InParanoid" id="P76118"/>
<dbReference type="OMA" id="IPRVYFI"/>
<dbReference type="BioCyc" id="EcoCyc:G6766-MONOMER"/>
<dbReference type="PRO" id="PR:P76118"/>
<dbReference type="Proteomes" id="UP000000625">
    <property type="component" value="Chromosome"/>
</dbReference>
<dbReference type="InterPro" id="IPR020099">
    <property type="entry name" value="DUF5445"/>
</dbReference>
<dbReference type="Pfam" id="PF17520">
    <property type="entry name" value="DUF5445"/>
    <property type="match status" value="1"/>
</dbReference>
<reference key="1">
    <citation type="journal article" date="1997" name="Science">
        <title>The complete genome sequence of Escherichia coli K-12.</title>
        <authorList>
            <person name="Blattner F.R."/>
            <person name="Plunkett G. III"/>
            <person name="Bloch C.A."/>
            <person name="Perna N.T."/>
            <person name="Burland V."/>
            <person name="Riley M."/>
            <person name="Collado-Vides J."/>
            <person name="Glasner J.D."/>
            <person name="Rode C.K."/>
            <person name="Mayhew G.F."/>
            <person name="Gregor J."/>
            <person name="Davis N.W."/>
            <person name="Kirkpatrick H.A."/>
            <person name="Goeden M.A."/>
            <person name="Rose D.J."/>
            <person name="Mau B."/>
            <person name="Shao Y."/>
        </authorList>
    </citation>
    <scope>NUCLEOTIDE SEQUENCE [LARGE SCALE GENOMIC DNA]</scope>
    <source>
        <strain>K12 / MG1655 / ATCC 47076</strain>
    </source>
</reference>
<reference key="2">
    <citation type="journal article" date="2006" name="Mol. Syst. Biol.">
        <title>Highly accurate genome sequences of Escherichia coli K-12 strains MG1655 and W3110.</title>
        <authorList>
            <person name="Hayashi K."/>
            <person name="Morooka N."/>
            <person name="Yamamoto Y."/>
            <person name="Fujita K."/>
            <person name="Isono K."/>
            <person name="Choi S."/>
            <person name="Ohtsubo E."/>
            <person name="Baba T."/>
            <person name="Wanner B.L."/>
            <person name="Mori H."/>
            <person name="Horiuchi T."/>
        </authorList>
    </citation>
    <scope>NUCLEOTIDE SEQUENCE [LARGE SCALE GENOMIC DNA]</scope>
    <source>
        <strain>K12 / W3110 / ATCC 27325 / DSM 5911</strain>
    </source>
</reference>
<gene>
    <name type="primary">yncH</name>
    <name type="ordered locus">b1455</name>
    <name type="ordered locus">JW5235</name>
</gene>